<dbReference type="EC" id="2.3.1.274" evidence="1"/>
<dbReference type="EMBL" id="CP000813">
    <property type="protein sequence ID" value="ABV62171.1"/>
    <property type="molecule type" value="Genomic_DNA"/>
</dbReference>
<dbReference type="RefSeq" id="WP_012009928.1">
    <property type="nucleotide sequence ID" value="NC_009848.4"/>
</dbReference>
<dbReference type="SMR" id="A8FD54"/>
<dbReference type="STRING" id="315750.BPUM_1488"/>
<dbReference type="GeneID" id="5620751"/>
<dbReference type="KEGG" id="bpu:BPUM_1488"/>
<dbReference type="eggNOG" id="COG0416">
    <property type="taxonomic scope" value="Bacteria"/>
</dbReference>
<dbReference type="HOGENOM" id="CLU_039379_1_1_9"/>
<dbReference type="OrthoDB" id="9806408at2"/>
<dbReference type="UniPathway" id="UPA00085"/>
<dbReference type="Proteomes" id="UP000001355">
    <property type="component" value="Chromosome"/>
</dbReference>
<dbReference type="GO" id="GO:0005737">
    <property type="term" value="C:cytoplasm"/>
    <property type="evidence" value="ECO:0007669"/>
    <property type="project" value="UniProtKB-SubCell"/>
</dbReference>
<dbReference type="GO" id="GO:0043811">
    <property type="term" value="F:phosphate:acyl-[acyl carrier protein] acyltransferase activity"/>
    <property type="evidence" value="ECO:0007669"/>
    <property type="project" value="UniProtKB-UniRule"/>
</dbReference>
<dbReference type="GO" id="GO:0006633">
    <property type="term" value="P:fatty acid biosynthetic process"/>
    <property type="evidence" value="ECO:0007669"/>
    <property type="project" value="UniProtKB-UniRule"/>
</dbReference>
<dbReference type="GO" id="GO:0008654">
    <property type="term" value="P:phospholipid biosynthetic process"/>
    <property type="evidence" value="ECO:0007669"/>
    <property type="project" value="UniProtKB-KW"/>
</dbReference>
<dbReference type="Gene3D" id="3.40.718.10">
    <property type="entry name" value="Isopropylmalate Dehydrogenase"/>
    <property type="match status" value="1"/>
</dbReference>
<dbReference type="HAMAP" id="MF_00019">
    <property type="entry name" value="PlsX"/>
    <property type="match status" value="1"/>
</dbReference>
<dbReference type="InterPro" id="IPR003664">
    <property type="entry name" value="FA_synthesis"/>
</dbReference>
<dbReference type="InterPro" id="IPR012281">
    <property type="entry name" value="Phospholipid_synth_PlsX-like"/>
</dbReference>
<dbReference type="NCBIfam" id="TIGR00182">
    <property type="entry name" value="plsX"/>
    <property type="match status" value="1"/>
</dbReference>
<dbReference type="PANTHER" id="PTHR30100">
    <property type="entry name" value="FATTY ACID/PHOSPHOLIPID SYNTHESIS PROTEIN PLSX"/>
    <property type="match status" value="1"/>
</dbReference>
<dbReference type="PANTHER" id="PTHR30100:SF1">
    <property type="entry name" value="PHOSPHATE ACYLTRANSFERASE"/>
    <property type="match status" value="1"/>
</dbReference>
<dbReference type="Pfam" id="PF02504">
    <property type="entry name" value="FA_synthesis"/>
    <property type="match status" value="1"/>
</dbReference>
<dbReference type="PIRSF" id="PIRSF002465">
    <property type="entry name" value="Phsphlp_syn_PlsX"/>
    <property type="match status" value="1"/>
</dbReference>
<dbReference type="SUPFAM" id="SSF53659">
    <property type="entry name" value="Isocitrate/Isopropylmalate dehydrogenase-like"/>
    <property type="match status" value="1"/>
</dbReference>
<proteinExistence type="inferred from homology"/>
<comment type="function">
    <text evidence="1">Catalyzes the reversible formation of acyl-phosphate (acyl-PO(4)) from acyl-[acyl-carrier-protein] (acyl-ACP). This enzyme utilizes acyl-ACP as fatty acyl donor, but not acyl-CoA.</text>
</comment>
<comment type="catalytic activity">
    <reaction evidence="1">
        <text>a fatty acyl-[ACP] + phosphate = an acyl phosphate + holo-[ACP]</text>
        <dbReference type="Rhea" id="RHEA:42292"/>
        <dbReference type="Rhea" id="RHEA-COMP:9685"/>
        <dbReference type="Rhea" id="RHEA-COMP:14125"/>
        <dbReference type="ChEBI" id="CHEBI:43474"/>
        <dbReference type="ChEBI" id="CHEBI:59918"/>
        <dbReference type="ChEBI" id="CHEBI:64479"/>
        <dbReference type="ChEBI" id="CHEBI:138651"/>
        <dbReference type="EC" id="2.3.1.274"/>
    </reaction>
</comment>
<comment type="pathway">
    <text evidence="1">Lipid metabolism; phospholipid metabolism.</text>
</comment>
<comment type="subunit">
    <text evidence="1">Homodimer. Probably interacts with PlsY.</text>
</comment>
<comment type="subcellular location">
    <subcellularLocation>
        <location evidence="1">Cytoplasm</location>
    </subcellularLocation>
    <text evidence="1">Associated with the membrane possibly through PlsY.</text>
</comment>
<comment type="similarity">
    <text evidence="1">Belongs to the PlsX family.</text>
</comment>
<name>PLSX_BACP2</name>
<feature type="chain" id="PRO_1000057169" description="Phosphate acyltransferase">
    <location>
        <begin position="1"/>
        <end position="332"/>
    </location>
</feature>
<accession>A8FD54</accession>
<gene>
    <name evidence="1" type="primary">plsX</name>
    <name type="ordered locus">BPUM_1488</name>
</gene>
<reference key="1">
    <citation type="journal article" date="2007" name="PLoS ONE">
        <title>Paradoxical DNA repair and peroxide resistance gene conservation in Bacillus pumilus SAFR-032.</title>
        <authorList>
            <person name="Gioia J."/>
            <person name="Yerrapragada S."/>
            <person name="Qin X."/>
            <person name="Jiang H."/>
            <person name="Igboeli O.C."/>
            <person name="Muzny D."/>
            <person name="Dugan-Rocha S."/>
            <person name="Ding Y."/>
            <person name="Hawes A."/>
            <person name="Liu W."/>
            <person name="Perez L."/>
            <person name="Kovar C."/>
            <person name="Dinh H."/>
            <person name="Lee S."/>
            <person name="Nazareth L."/>
            <person name="Blyth P."/>
            <person name="Holder M."/>
            <person name="Buhay C."/>
            <person name="Tirumalai M.R."/>
            <person name="Liu Y."/>
            <person name="Dasgupta I."/>
            <person name="Bokhetache L."/>
            <person name="Fujita M."/>
            <person name="Karouia F."/>
            <person name="Eswara Moorthy P."/>
            <person name="Siefert J."/>
            <person name="Uzman A."/>
            <person name="Buzumbo P."/>
            <person name="Verma A."/>
            <person name="Zwiya H."/>
            <person name="McWilliams B.D."/>
            <person name="Olowu A."/>
            <person name="Clinkenbeard K.D."/>
            <person name="Newcombe D."/>
            <person name="Golebiewski L."/>
            <person name="Petrosino J.F."/>
            <person name="Nicholson W.L."/>
            <person name="Fox G.E."/>
            <person name="Venkateswaran K."/>
            <person name="Highlander S.K."/>
            <person name="Weinstock G.M."/>
        </authorList>
    </citation>
    <scope>NUCLEOTIDE SEQUENCE [LARGE SCALE GENOMIC DNA]</scope>
    <source>
        <strain>SAFR-032</strain>
    </source>
</reference>
<organism>
    <name type="scientific">Bacillus pumilus (strain SAFR-032)</name>
    <dbReference type="NCBI Taxonomy" id="315750"/>
    <lineage>
        <taxon>Bacteria</taxon>
        <taxon>Bacillati</taxon>
        <taxon>Bacillota</taxon>
        <taxon>Bacilli</taxon>
        <taxon>Bacillales</taxon>
        <taxon>Bacillaceae</taxon>
        <taxon>Bacillus</taxon>
    </lineage>
</organism>
<keyword id="KW-0963">Cytoplasm</keyword>
<keyword id="KW-0444">Lipid biosynthesis</keyword>
<keyword id="KW-0443">Lipid metabolism</keyword>
<keyword id="KW-0594">Phospholipid biosynthesis</keyword>
<keyword id="KW-1208">Phospholipid metabolism</keyword>
<keyword id="KW-0808">Transferase</keyword>
<protein>
    <recommendedName>
        <fullName evidence="1">Phosphate acyltransferase</fullName>
        <ecNumber evidence="1">2.3.1.274</ecNumber>
    </recommendedName>
    <alternativeName>
        <fullName evidence="1">Acyl-ACP phosphotransacylase</fullName>
    </alternativeName>
    <alternativeName>
        <fullName evidence="1">Acyl-[acyl-carrier-protein]--phosphate acyltransferase</fullName>
    </alternativeName>
    <alternativeName>
        <fullName evidence="1">Phosphate-acyl-ACP acyltransferase</fullName>
    </alternativeName>
</protein>
<evidence type="ECO:0000255" key="1">
    <source>
        <dbReference type="HAMAP-Rule" id="MF_00019"/>
    </source>
</evidence>
<sequence>MRIAVDAMGGDHAPKAIIDGVQKSLTAFSDIEITLVGDESKIKPYITNNERITILDAKEVIEPTDEPVRAVRRKKDSSMVKMAQEVSEGRADACISAGNTGALMTAGLFIVGRIDGIDRPALAPTLPTLDGSGFLLLDVGANVDAKPEHLVQYAMMGSIYAERVFPKSNPRVGLLNVGTEDKKGNDLTKKTFELLKASDLNFVGNVESRDLLEGVADVVVTDGFTGNIALKTIEGTALSVFKMLKETLTSSFTAKIAAGMMKPKLMQMKSKMDYSEYGGAALFGLKAPVIKAHGSSDENAIFHAIRQARDIVEKDVSAIIHQEVQKETTNES</sequence>